<organism>
    <name type="scientific">Caldanaerobacter subterraneus subsp. tengcongensis (strain DSM 15242 / JCM 11007 / NBRC 100824 / MB4)</name>
    <name type="common">Thermoanaerobacter tengcongensis</name>
    <dbReference type="NCBI Taxonomy" id="273068"/>
    <lineage>
        <taxon>Bacteria</taxon>
        <taxon>Bacillati</taxon>
        <taxon>Bacillota</taxon>
        <taxon>Clostridia</taxon>
        <taxon>Thermoanaerobacterales</taxon>
        <taxon>Thermoanaerobacteraceae</taxon>
        <taxon>Caldanaerobacter</taxon>
    </lineage>
</organism>
<dbReference type="EMBL" id="AE008691">
    <property type="protein sequence ID" value="AAM25430.1"/>
    <property type="molecule type" value="Genomic_DNA"/>
</dbReference>
<dbReference type="RefSeq" id="WP_011026333.1">
    <property type="nucleotide sequence ID" value="NZ_JANUCV010000001.1"/>
</dbReference>
<dbReference type="SMR" id="Q8R7V9"/>
<dbReference type="STRING" id="273068.TTE2287"/>
<dbReference type="KEGG" id="tte:TTE2287"/>
<dbReference type="eggNOG" id="COG0091">
    <property type="taxonomic scope" value="Bacteria"/>
</dbReference>
<dbReference type="HOGENOM" id="CLU_083987_3_3_9"/>
<dbReference type="OrthoDB" id="9805969at2"/>
<dbReference type="Proteomes" id="UP000000555">
    <property type="component" value="Chromosome"/>
</dbReference>
<dbReference type="GO" id="GO:0022625">
    <property type="term" value="C:cytosolic large ribosomal subunit"/>
    <property type="evidence" value="ECO:0007669"/>
    <property type="project" value="TreeGrafter"/>
</dbReference>
<dbReference type="GO" id="GO:0019843">
    <property type="term" value="F:rRNA binding"/>
    <property type="evidence" value="ECO:0007669"/>
    <property type="project" value="UniProtKB-UniRule"/>
</dbReference>
<dbReference type="GO" id="GO:0003735">
    <property type="term" value="F:structural constituent of ribosome"/>
    <property type="evidence" value="ECO:0007669"/>
    <property type="project" value="InterPro"/>
</dbReference>
<dbReference type="GO" id="GO:0006412">
    <property type="term" value="P:translation"/>
    <property type="evidence" value="ECO:0007669"/>
    <property type="project" value="UniProtKB-UniRule"/>
</dbReference>
<dbReference type="CDD" id="cd00336">
    <property type="entry name" value="Ribosomal_L22"/>
    <property type="match status" value="1"/>
</dbReference>
<dbReference type="FunFam" id="3.90.470.10:FF:000011">
    <property type="entry name" value="50S ribosomal protein L22"/>
    <property type="match status" value="1"/>
</dbReference>
<dbReference type="Gene3D" id="3.90.470.10">
    <property type="entry name" value="Ribosomal protein L22/L17"/>
    <property type="match status" value="1"/>
</dbReference>
<dbReference type="HAMAP" id="MF_01331_B">
    <property type="entry name" value="Ribosomal_uL22_B"/>
    <property type="match status" value="1"/>
</dbReference>
<dbReference type="InterPro" id="IPR001063">
    <property type="entry name" value="Ribosomal_uL22"/>
</dbReference>
<dbReference type="InterPro" id="IPR005727">
    <property type="entry name" value="Ribosomal_uL22_bac/chlpt-type"/>
</dbReference>
<dbReference type="InterPro" id="IPR047867">
    <property type="entry name" value="Ribosomal_uL22_bac/org-type"/>
</dbReference>
<dbReference type="InterPro" id="IPR018260">
    <property type="entry name" value="Ribosomal_uL22_CS"/>
</dbReference>
<dbReference type="InterPro" id="IPR036394">
    <property type="entry name" value="Ribosomal_uL22_sf"/>
</dbReference>
<dbReference type="NCBIfam" id="TIGR01044">
    <property type="entry name" value="rplV_bact"/>
    <property type="match status" value="1"/>
</dbReference>
<dbReference type="PANTHER" id="PTHR13501">
    <property type="entry name" value="CHLOROPLAST 50S RIBOSOMAL PROTEIN L22-RELATED"/>
    <property type="match status" value="1"/>
</dbReference>
<dbReference type="PANTHER" id="PTHR13501:SF8">
    <property type="entry name" value="LARGE RIBOSOMAL SUBUNIT PROTEIN UL22M"/>
    <property type="match status" value="1"/>
</dbReference>
<dbReference type="Pfam" id="PF00237">
    <property type="entry name" value="Ribosomal_L22"/>
    <property type="match status" value="1"/>
</dbReference>
<dbReference type="SUPFAM" id="SSF54843">
    <property type="entry name" value="Ribosomal protein L22"/>
    <property type="match status" value="1"/>
</dbReference>
<dbReference type="PROSITE" id="PS00464">
    <property type="entry name" value="RIBOSOMAL_L22"/>
    <property type="match status" value="1"/>
</dbReference>
<proteinExistence type="inferred from homology"/>
<sequence>MEARAIARYVRISPRKARLVLNLIRGKHVDEALAILKFTPKKASKIVEKVLKSAIANAENNHNMNRDNLYVAKAVADEGPTMKRVLPRAMGRADIMRRRTSHITIVVKEKEE</sequence>
<reference key="1">
    <citation type="journal article" date="2002" name="Genome Res.">
        <title>A complete sequence of the T. tengcongensis genome.</title>
        <authorList>
            <person name="Bao Q."/>
            <person name="Tian Y."/>
            <person name="Li W."/>
            <person name="Xu Z."/>
            <person name="Xuan Z."/>
            <person name="Hu S."/>
            <person name="Dong W."/>
            <person name="Yang J."/>
            <person name="Chen Y."/>
            <person name="Xue Y."/>
            <person name="Xu Y."/>
            <person name="Lai X."/>
            <person name="Huang L."/>
            <person name="Dong X."/>
            <person name="Ma Y."/>
            <person name="Ling L."/>
            <person name="Tan H."/>
            <person name="Chen R."/>
            <person name="Wang J."/>
            <person name="Yu J."/>
            <person name="Yang H."/>
        </authorList>
    </citation>
    <scope>NUCLEOTIDE SEQUENCE [LARGE SCALE GENOMIC DNA]</scope>
    <source>
        <strain>DSM 15242 / JCM 11007 / NBRC 100824 / MB4</strain>
    </source>
</reference>
<protein>
    <recommendedName>
        <fullName evidence="1">Large ribosomal subunit protein uL22</fullName>
    </recommendedName>
    <alternativeName>
        <fullName evidence="2">50S ribosomal protein L22</fullName>
    </alternativeName>
</protein>
<comment type="function">
    <text evidence="1">This protein binds specifically to 23S rRNA; its binding is stimulated by other ribosomal proteins, e.g. L4, L17, and L20. It is important during the early stages of 50S assembly. It makes multiple contacts with different domains of the 23S rRNA in the assembled 50S subunit and ribosome (By similarity).</text>
</comment>
<comment type="function">
    <text evidence="1">The globular domain of the protein is located near the polypeptide exit tunnel on the outside of the subunit, while an extended beta-hairpin is found that lines the wall of the exit tunnel in the center of the 70S ribosome.</text>
</comment>
<comment type="subunit">
    <text evidence="1">Part of the 50S ribosomal subunit.</text>
</comment>
<comment type="similarity">
    <text evidence="1">Belongs to the universal ribosomal protein uL22 family.</text>
</comment>
<accession>Q8R7V9</accession>
<name>RL22_CALS4</name>
<gene>
    <name evidence="1" type="primary">rplV</name>
    <name type="ordered locus">TTE2287</name>
</gene>
<keyword id="KW-1185">Reference proteome</keyword>
<keyword id="KW-0687">Ribonucleoprotein</keyword>
<keyword id="KW-0689">Ribosomal protein</keyword>
<keyword id="KW-0694">RNA-binding</keyword>
<keyword id="KW-0699">rRNA-binding</keyword>
<evidence type="ECO:0000255" key="1">
    <source>
        <dbReference type="HAMAP-Rule" id="MF_01331"/>
    </source>
</evidence>
<evidence type="ECO:0000305" key="2"/>
<feature type="chain" id="PRO_0000125251" description="Large ribosomal subunit protein uL22">
    <location>
        <begin position="1"/>
        <end position="112"/>
    </location>
</feature>